<reference key="1">
    <citation type="journal article" date="1999" name="Gene">
        <title>Four rice genes encoding cysteine synthase: isolation and differential responses to sulfur, nitrogen and light.</title>
        <authorList>
            <person name="Nakamura T."/>
            <person name="Yamaguchi Y."/>
            <person name="Sano H."/>
        </authorList>
    </citation>
    <scope>NUCLEOTIDE SEQUENCE [MRNA]</scope>
    <source>
        <strain>cv. Nipponbare</strain>
    </source>
</reference>
<reference key="2">
    <citation type="journal article" date="2005" name="Nature">
        <title>The map-based sequence of the rice genome.</title>
        <authorList>
            <consortium name="International rice genome sequencing project (IRGSP)"/>
        </authorList>
    </citation>
    <scope>NUCLEOTIDE SEQUENCE [LARGE SCALE GENOMIC DNA]</scope>
    <source>
        <strain>cv. Nipponbare</strain>
    </source>
</reference>
<reference key="3">
    <citation type="journal article" date="2008" name="Nucleic Acids Res.">
        <title>The rice annotation project database (RAP-DB): 2008 update.</title>
        <authorList>
            <consortium name="The rice annotation project (RAP)"/>
        </authorList>
    </citation>
    <scope>GENOME REANNOTATION</scope>
    <source>
        <strain>cv. Nipponbare</strain>
    </source>
</reference>
<reference key="4">
    <citation type="journal article" date="2013" name="Rice">
        <title>Improvement of the Oryza sativa Nipponbare reference genome using next generation sequence and optical map data.</title>
        <authorList>
            <person name="Kawahara Y."/>
            <person name="de la Bastide M."/>
            <person name="Hamilton J.P."/>
            <person name="Kanamori H."/>
            <person name="McCombie W.R."/>
            <person name="Ouyang S."/>
            <person name="Schwartz D.C."/>
            <person name="Tanaka T."/>
            <person name="Wu J."/>
            <person name="Zhou S."/>
            <person name="Childs K.L."/>
            <person name="Davidson R.M."/>
            <person name="Lin H."/>
            <person name="Quesada-Ocampo L."/>
            <person name="Vaillancourt B."/>
            <person name="Sakai H."/>
            <person name="Lee S.S."/>
            <person name="Kim J."/>
            <person name="Numa H."/>
            <person name="Itoh T."/>
            <person name="Buell C.R."/>
            <person name="Matsumoto T."/>
        </authorList>
    </citation>
    <scope>GENOME REANNOTATION</scope>
    <source>
        <strain>cv. Nipponbare</strain>
    </source>
</reference>
<sequence length="321" mass="33838">MGETIAKDVTELIGNTPLVYLNRVTDGCVGRVAAKLESMEPCSSVKDRIGYSMITDAEEKGLITPGKSVLIEPTSGNTGIGLAFMAAAKGYRLVLTMPASMSMERRIILKAFGAELILTDPLLGMKGAVQKAEELAAKTNNSFILQQFENPANPKIHYETTGPEIWKGTGGKVDGLVSGIGTGGTITGAGRYLREQNPDIKIYGVEPVESAVLSGGKPGPHKIQGIGAGFVPGVLDVDLINETVQVSSDEAIEMAKALALKEGLLVGISSGAAAAAAVRLAQRPENEGKLFVVVFPSFGERYLSSVLFQSIKKEAENMVVE</sequence>
<protein>
    <recommendedName>
        <fullName>Cysteine synthase</fullName>
        <shortName>CSase</shortName>
        <ecNumber>2.5.1.47</ecNumber>
    </recommendedName>
    <alternativeName>
        <fullName>O-acetylserine (thiol)-lyase</fullName>
        <shortName>OAS-TL</shortName>
    </alternativeName>
    <alternativeName>
        <fullName>O-acetylserine sulfhydrylase</fullName>
    </alternativeName>
</protein>
<accession>Q9XEA6</accession>
<accession>Q0ILS7</accession>
<feature type="chain" id="PRO_0000167121" description="Cysteine synthase">
    <location>
        <begin position="1"/>
        <end position="321"/>
    </location>
</feature>
<feature type="binding site" evidence="1">
    <location>
        <position position="77"/>
    </location>
    <ligand>
        <name>pyridoxal 5'-phosphate</name>
        <dbReference type="ChEBI" id="CHEBI:597326"/>
    </ligand>
</feature>
<feature type="binding site" evidence="1">
    <location>
        <begin position="181"/>
        <end position="185"/>
    </location>
    <ligand>
        <name>pyridoxal 5'-phosphate</name>
        <dbReference type="ChEBI" id="CHEBI:597326"/>
    </ligand>
</feature>
<feature type="binding site" evidence="1">
    <location>
        <position position="269"/>
    </location>
    <ligand>
        <name>pyridoxal 5'-phosphate</name>
        <dbReference type="ChEBI" id="CHEBI:597326"/>
    </ligand>
</feature>
<feature type="modified residue" description="N6-(pyridoxal phosphate)lysine" evidence="1">
    <location>
        <position position="46"/>
    </location>
</feature>
<dbReference type="EC" id="2.5.1.47"/>
<dbReference type="EMBL" id="AF073695">
    <property type="protein sequence ID" value="AAD23907.1"/>
    <property type="molecule type" value="mRNA"/>
</dbReference>
<dbReference type="EMBL" id="AP008218">
    <property type="protein sequence ID" value="BAF30338.1"/>
    <property type="molecule type" value="Genomic_DNA"/>
</dbReference>
<dbReference type="EMBL" id="AP014968">
    <property type="status" value="NOT_ANNOTATED_CDS"/>
    <property type="molecule type" value="Genomic_DNA"/>
</dbReference>
<dbReference type="SMR" id="Q9XEA6"/>
<dbReference type="FunCoup" id="Q9XEA6">
    <property type="interactions" value="1983"/>
</dbReference>
<dbReference type="STRING" id="39947.Q9XEA6"/>
<dbReference type="PaxDb" id="39947-Q9XEA6"/>
<dbReference type="EnsemblPlants" id="Os12t0625000-01">
    <property type="protein sequence ID" value="Os12t0625000-01"/>
    <property type="gene ID" value="Os12g0625000"/>
</dbReference>
<dbReference type="Gramene" id="Os12t0625000-01">
    <property type="protein sequence ID" value="Os12t0625000-01"/>
    <property type="gene ID" value="Os12g0625000"/>
</dbReference>
<dbReference type="KEGG" id="dosa:Os12g0625000"/>
<dbReference type="eggNOG" id="KOG1252">
    <property type="taxonomic scope" value="Eukaryota"/>
</dbReference>
<dbReference type="HOGENOM" id="CLU_021018_1_1_1"/>
<dbReference type="InParanoid" id="Q9XEA6"/>
<dbReference type="BRENDA" id="2.5.1.47">
    <property type="organism ID" value="4460"/>
</dbReference>
<dbReference type="PlantReactome" id="R-OSA-1119331">
    <property type="pathway name" value="Cysteine biosynthesis I"/>
</dbReference>
<dbReference type="UniPathway" id="UPA00136">
    <property type="reaction ID" value="UER00200"/>
</dbReference>
<dbReference type="Proteomes" id="UP000000763">
    <property type="component" value="Chromosome 12"/>
</dbReference>
<dbReference type="Proteomes" id="UP000059680">
    <property type="component" value="Chromosome 12"/>
</dbReference>
<dbReference type="GO" id="GO:0005737">
    <property type="term" value="C:cytoplasm"/>
    <property type="evidence" value="ECO:0000318"/>
    <property type="project" value="GO_Central"/>
</dbReference>
<dbReference type="GO" id="GO:0004124">
    <property type="term" value="F:cysteine synthase activity"/>
    <property type="evidence" value="ECO:0000318"/>
    <property type="project" value="GO_Central"/>
</dbReference>
<dbReference type="GO" id="GO:0006535">
    <property type="term" value="P:cysteine biosynthetic process from serine"/>
    <property type="evidence" value="ECO:0000318"/>
    <property type="project" value="GO_Central"/>
</dbReference>
<dbReference type="CDD" id="cd01561">
    <property type="entry name" value="CBS_like"/>
    <property type="match status" value="1"/>
</dbReference>
<dbReference type="FunFam" id="3.40.50.1100:FF:000006">
    <property type="entry name" value="Cysteine synthase"/>
    <property type="match status" value="1"/>
</dbReference>
<dbReference type="FunFam" id="3.40.50.1100:FF:000130">
    <property type="entry name" value="Cysteine synthase"/>
    <property type="match status" value="1"/>
</dbReference>
<dbReference type="Gene3D" id="3.40.50.1100">
    <property type="match status" value="2"/>
</dbReference>
<dbReference type="InterPro" id="IPR005856">
    <property type="entry name" value="Cys_synth"/>
</dbReference>
<dbReference type="InterPro" id="IPR050214">
    <property type="entry name" value="Cys_Synth/Cystath_Beta-Synth"/>
</dbReference>
<dbReference type="InterPro" id="IPR005859">
    <property type="entry name" value="CysK"/>
</dbReference>
<dbReference type="InterPro" id="IPR001216">
    <property type="entry name" value="P-phosphate_BS"/>
</dbReference>
<dbReference type="InterPro" id="IPR001926">
    <property type="entry name" value="TrpB-like_PALP"/>
</dbReference>
<dbReference type="InterPro" id="IPR036052">
    <property type="entry name" value="TrpB-like_PALP_sf"/>
</dbReference>
<dbReference type="NCBIfam" id="TIGR01139">
    <property type="entry name" value="cysK"/>
    <property type="match status" value="1"/>
</dbReference>
<dbReference type="NCBIfam" id="TIGR01136">
    <property type="entry name" value="cysKM"/>
    <property type="match status" value="1"/>
</dbReference>
<dbReference type="PANTHER" id="PTHR10314">
    <property type="entry name" value="CYSTATHIONINE BETA-SYNTHASE"/>
    <property type="match status" value="1"/>
</dbReference>
<dbReference type="Pfam" id="PF00291">
    <property type="entry name" value="PALP"/>
    <property type="match status" value="1"/>
</dbReference>
<dbReference type="SUPFAM" id="SSF53686">
    <property type="entry name" value="Tryptophan synthase beta subunit-like PLP-dependent enzymes"/>
    <property type="match status" value="1"/>
</dbReference>
<dbReference type="PROSITE" id="PS00901">
    <property type="entry name" value="CYS_SYNTHASE"/>
    <property type="match status" value="1"/>
</dbReference>
<comment type="catalytic activity">
    <reaction>
        <text>O-acetyl-L-serine + hydrogen sulfide = L-cysteine + acetate</text>
        <dbReference type="Rhea" id="RHEA:14829"/>
        <dbReference type="ChEBI" id="CHEBI:29919"/>
        <dbReference type="ChEBI" id="CHEBI:30089"/>
        <dbReference type="ChEBI" id="CHEBI:35235"/>
        <dbReference type="ChEBI" id="CHEBI:58340"/>
        <dbReference type="EC" id="2.5.1.47"/>
    </reaction>
</comment>
<comment type="cofactor">
    <cofactor evidence="1">
        <name>pyridoxal 5'-phosphate</name>
        <dbReference type="ChEBI" id="CHEBI:597326"/>
    </cofactor>
</comment>
<comment type="pathway">
    <text>Amino-acid biosynthesis; L-cysteine biosynthesis; L-cysteine from L-serine: step 2/2.</text>
</comment>
<comment type="subunit">
    <text evidence="1">Homodimer.</text>
</comment>
<comment type="subcellular location">
    <subcellularLocation>
        <location evidence="1">Cytoplasm</location>
    </subcellularLocation>
</comment>
<comment type="similarity">
    <text evidence="2">Belongs to the cysteine synthase/cystathionine beta-synthase family.</text>
</comment>
<gene>
    <name type="primary">RCS1</name>
    <name type="ordered locus">Os12g0625000</name>
    <name type="ordered locus">LOC_Os12g42980</name>
</gene>
<keyword id="KW-0028">Amino-acid biosynthesis</keyword>
<keyword id="KW-0198">Cysteine biosynthesis</keyword>
<keyword id="KW-0963">Cytoplasm</keyword>
<keyword id="KW-0663">Pyridoxal phosphate</keyword>
<keyword id="KW-1185">Reference proteome</keyword>
<keyword id="KW-0808">Transferase</keyword>
<proteinExistence type="evidence at transcript level"/>
<name>CYSK1_ORYSJ</name>
<evidence type="ECO:0000250" key="1"/>
<evidence type="ECO:0000305" key="2"/>
<organism>
    <name type="scientific">Oryza sativa subsp. japonica</name>
    <name type="common">Rice</name>
    <dbReference type="NCBI Taxonomy" id="39947"/>
    <lineage>
        <taxon>Eukaryota</taxon>
        <taxon>Viridiplantae</taxon>
        <taxon>Streptophyta</taxon>
        <taxon>Embryophyta</taxon>
        <taxon>Tracheophyta</taxon>
        <taxon>Spermatophyta</taxon>
        <taxon>Magnoliopsida</taxon>
        <taxon>Liliopsida</taxon>
        <taxon>Poales</taxon>
        <taxon>Poaceae</taxon>
        <taxon>BOP clade</taxon>
        <taxon>Oryzoideae</taxon>
        <taxon>Oryzeae</taxon>
        <taxon>Oryzinae</taxon>
        <taxon>Oryza</taxon>
        <taxon>Oryza sativa</taxon>
    </lineage>
</organism>